<reference key="1">
    <citation type="journal article" date="2007" name="J. Bacteriol.">
        <title>The complete genome sequence of Roseobacter denitrificans reveals a mixotrophic rather than photosynthetic metabolism.</title>
        <authorList>
            <person name="Swingley W.D."/>
            <person name="Sadekar S."/>
            <person name="Mastrian S.D."/>
            <person name="Matthies H.J."/>
            <person name="Hao J."/>
            <person name="Ramos H."/>
            <person name="Acharya C.R."/>
            <person name="Conrad A.L."/>
            <person name="Taylor H.L."/>
            <person name="Dejesa L.C."/>
            <person name="Shah M.K."/>
            <person name="O'Huallachain M.E."/>
            <person name="Lince M.T."/>
            <person name="Blankenship R.E."/>
            <person name="Beatty J.T."/>
            <person name="Touchman J.W."/>
        </authorList>
    </citation>
    <scope>NUCLEOTIDE SEQUENCE [LARGE SCALE GENOMIC DNA]</scope>
    <source>
        <strain>ATCC 33942 / OCh 114</strain>
    </source>
</reference>
<comment type="function">
    <text evidence="1">Exhibits a very high intrinsic GTPase hydrolysis rate. Involved in the addition of a carboxymethylaminomethyl (cmnm) group at the wobble position (U34) of certain tRNAs, forming tRNA-cmnm(5)s(2)U34.</text>
</comment>
<comment type="cofactor">
    <cofactor evidence="1">
        <name>K(+)</name>
        <dbReference type="ChEBI" id="CHEBI:29103"/>
    </cofactor>
    <text evidence="1">Binds 1 potassium ion per subunit.</text>
</comment>
<comment type="subunit">
    <text evidence="1">Homodimer. Heterotetramer of two MnmE and two MnmG subunits.</text>
</comment>
<comment type="subcellular location">
    <subcellularLocation>
        <location evidence="1">Cytoplasm</location>
    </subcellularLocation>
</comment>
<comment type="similarity">
    <text evidence="1">Belongs to the TRAFAC class TrmE-Era-EngA-EngB-Septin-like GTPase superfamily. TrmE GTPase family.</text>
</comment>
<gene>
    <name evidence="1" type="primary">mnmE</name>
    <name evidence="1" type="synonym">trmE</name>
    <name type="ordered locus">RD1_0433</name>
</gene>
<protein>
    <recommendedName>
        <fullName evidence="1">tRNA modification GTPase MnmE</fullName>
        <ecNumber evidence="1">3.6.-.-</ecNumber>
    </recommendedName>
</protein>
<keyword id="KW-0963">Cytoplasm</keyword>
<keyword id="KW-0342">GTP-binding</keyword>
<keyword id="KW-0378">Hydrolase</keyword>
<keyword id="KW-0460">Magnesium</keyword>
<keyword id="KW-0479">Metal-binding</keyword>
<keyword id="KW-0547">Nucleotide-binding</keyword>
<keyword id="KW-0630">Potassium</keyword>
<keyword id="KW-1185">Reference proteome</keyword>
<keyword id="KW-0819">tRNA processing</keyword>
<evidence type="ECO:0000255" key="1">
    <source>
        <dbReference type="HAMAP-Rule" id="MF_00379"/>
    </source>
</evidence>
<organism>
    <name type="scientific">Roseobacter denitrificans (strain ATCC 33942 / OCh 114)</name>
    <name type="common">Erythrobacter sp. (strain OCh 114)</name>
    <name type="synonym">Roseobacter denitrificans</name>
    <dbReference type="NCBI Taxonomy" id="375451"/>
    <lineage>
        <taxon>Bacteria</taxon>
        <taxon>Pseudomonadati</taxon>
        <taxon>Pseudomonadota</taxon>
        <taxon>Alphaproteobacteria</taxon>
        <taxon>Rhodobacterales</taxon>
        <taxon>Roseobacteraceae</taxon>
        <taxon>Roseobacter</taxon>
    </lineage>
</organism>
<name>MNME_ROSDO</name>
<proteinExistence type="inferred from homology"/>
<accession>Q16CZ5</accession>
<dbReference type="EC" id="3.6.-.-" evidence="1"/>
<dbReference type="EMBL" id="CP000362">
    <property type="protein sequence ID" value="ABG30148.1"/>
    <property type="molecule type" value="Genomic_DNA"/>
</dbReference>
<dbReference type="RefSeq" id="WP_011566770.1">
    <property type="nucleotide sequence ID" value="NC_008209.1"/>
</dbReference>
<dbReference type="SMR" id="Q16CZ5"/>
<dbReference type="STRING" id="375451.RD1_0433"/>
<dbReference type="KEGG" id="rde:RD1_0433"/>
<dbReference type="eggNOG" id="COG0486">
    <property type="taxonomic scope" value="Bacteria"/>
</dbReference>
<dbReference type="HOGENOM" id="CLU_019624_3_1_5"/>
<dbReference type="OrthoDB" id="9805918at2"/>
<dbReference type="Proteomes" id="UP000007029">
    <property type="component" value="Chromosome"/>
</dbReference>
<dbReference type="GO" id="GO:0005737">
    <property type="term" value="C:cytoplasm"/>
    <property type="evidence" value="ECO:0007669"/>
    <property type="project" value="UniProtKB-SubCell"/>
</dbReference>
<dbReference type="GO" id="GO:0005525">
    <property type="term" value="F:GTP binding"/>
    <property type="evidence" value="ECO:0007669"/>
    <property type="project" value="UniProtKB-UniRule"/>
</dbReference>
<dbReference type="GO" id="GO:0003924">
    <property type="term" value="F:GTPase activity"/>
    <property type="evidence" value="ECO:0007669"/>
    <property type="project" value="UniProtKB-UniRule"/>
</dbReference>
<dbReference type="GO" id="GO:0046872">
    <property type="term" value="F:metal ion binding"/>
    <property type="evidence" value="ECO:0007669"/>
    <property type="project" value="UniProtKB-KW"/>
</dbReference>
<dbReference type="GO" id="GO:0030488">
    <property type="term" value="P:tRNA methylation"/>
    <property type="evidence" value="ECO:0007669"/>
    <property type="project" value="TreeGrafter"/>
</dbReference>
<dbReference type="GO" id="GO:0002098">
    <property type="term" value="P:tRNA wobble uridine modification"/>
    <property type="evidence" value="ECO:0007669"/>
    <property type="project" value="TreeGrafter"/>
</dbReference>
<dbReference type="CDD" id="cd04164">
    <property type="entry name" value="trmE"/>
    <property type="match status" value="1"/>
</dbReference>
<dbReference type="CDD" id="cd14858">
    <property type="entry name" value="TrmE_N"/>
    <property type="match status" value="1"/>
</dbReference>
<dbReference type="FunFam" id="3.30.1360.120:FF:000007">
    <property type="entry name" value="tRNA modification GTPase GTPBP3, mitochondrial"/>
    <property type="match status" value="1"/>
</dbReference>
<dbReference type="Gene3D" id="3.40.50.300">
    <property type="entry name" value="P-loop containing nucleotide triphosphate hydrolases"/>
    <property type="match status" value="1"/>
</dbReference>
<dbReference type="Gene3D" id="3.30.1360.120">
    <property type="entry name" value="Probable tRNA modification gtpase trme, domain 1"/>
    <property type="match status" value="1"/>
</dbReference>
<dbReference type="Gene3D" id="1.20.120.430">
    <property type="entry name" value="tRNA modification GTPase MnmE domain 2"/>
    <property type="match status" value="1"/>
</dbReference>
<dbReference type="HAMAP" id="MF_00379">
    <property type="entry name" value="GTPase_MnmE"/>
    <property type="match status" value="1"/>
</dbReference>
<dbReference type="InterPro" id="IPR031168">
    <property type="entry name" value="G_TrmE"/>
</dbReference>
<dbReference type="InterPro" id="IPR006073">
    <property type="entry name" value="GTP-bd"/>
</dbReference>
<dbReference type="InterPro" id="IPR018948">
    <property type="entry name" value="GTP-bd_TrmE_N"/>
</dbReference>
<dbReference type="InterPro" id="IPR004520">
    <property type="entry name" value="GTPase_MnmE"/>
</dbReference>
<dbReference type="InterPro" id="IPR027368">
    <property type="entry name" value="MnmE_dom2"/>
</dbReference>
<dbReference type="InterPro" id="IPR025867">
    <property type="entry name" value="MnmE_helical"/>
</dbReference>
<dbReference type="InterPro" id="IPR027417">
    <property type="entry name" value="P-loop_NTPase"/>
</dbReference>
<dbReference type="InterPro" id="IPR005225">
    <property type="entry name" value="Small_GTP-bd"/>
</dbReference>
<dbReference type="InterPro" id="IPR027266">
    <property type="entry name" value="TrmE/GcvT_dom1"/>
</dbReference>
<dbReference type="NCBIfam" id="NF003661">
    <property type="entry name" value="PRK05291.1-3"/>
    <property type="match status" value="1"/>
</dbReference>
<dbReference type="NCBIfam" id="TIGR00231">
    <property type="entry name" value="small_GTP"/>
    <property type="match status" value="1"/>
</dbReference>
<dbReference type="PANTHER" id="PTHR42714">
    <property type="entry name" value="TRNA MODIFICATION GTPASE GTPBP3"/>
    <property type="match status" value="1"/>
</dbReference>
<dbReference type="PANTHER" id="PTHR42714:SF2">
    <property type="entry name" value="TRNA MODIFICATION GTPASE GTPBP3, MITOCHONDRIAL"/>
    <property type="match status" value="1"/>
</dbReference>
<dbReference type="Pfam" id="PF01926">
    <property type="entry name" value="MMR_HSR1"/>
    <property type="match status" value="1"/>
</dbReference>
<dbReference type="Pfam" id="PF12631">
    <property type="entry name" value="MnmE_helical"/>
    <property type="match status" value="1"/>
</dbReference>
<dbReference type="Pfam" id="PF10396">
    <property type="entry name" value="TrmE_N"/>
    <property type="match status" value="1"/>
</dbReference>
<dbReference type="PRINTS" id="PR00326">
    <property type="entry name" value="GTP1OBG"/>
</dbReference>
<dbReference type="SUPFAM" id="SSF103025">
    <property type="entry name" value="Folate-binding domain"/>
    <property type="match status" value="1"/>
</dbReference>
<dbReference type="SUPFAM" id="SSF52540">
    <property type="entry name" value="P-loop containing nucleoside triphosphate hydrolases"/>
    <property type="match status" value="1"/>
</dbReference>
<dbReference type="SUPFAM" id="SSF116878">
    <property type="entry name" value="TrmE connector domain"/>
    <property type="match status" value="1"/>
</dbReference>
<dbReference type="PROSITE" id="PS51709">
    <property type="entry name" value="G_TRME"/>
    <property type="match status" value="1"/>
</dbReference>
<sequence length="428" mass="46025">MDTVFALGSAQGRAGVSVIRLSGPAAWAVAETICGSLPDPRKSAVRVLRAQDGSVIDQALVLAFKAPHSFTGEDVVEFHVHGSIAVVRTVLDALSDQDVARLAEAGEFTRRALENGKLDLSQVEGLADLIDAETEAQRRQAVRVLTGALGEKVEVWRSKLIRAAALIEATIDFADEDVPVDVTPEVTSLLEDVSSDVRTEVAGTHVAERIRSGFEIALVGAPNAGKSTLLNKLAGRDAAITSEIAGTTRDVIEVRMDLGGLPVTFLDTAGLRQSADEIETIGIERAIKRAQEADLRVFLSGPDERLLIEPLEDDIRLTPKVDLAPGSQTGISGKTGQGIPELLEKIRSVFSERVSAVGLATHERHRLAMQRALEDLDNSFEALLRGPEFYDITAQELRSAIRALETLVGRIDAENLLDEIFSSFCLGK</sequence>
<feature type="chain" id="PRO_0000345898" description="tRNA modification GTPase MnmE">
    <location>
        <begin position="1"/>
        <end position="428"/>
    </location>
</feature>
<feature type="domain" description="TrmE-type G">
    <location>
        <begin position="213"/>
        <end position="351"/>
    </location>
</feature>
<feature type="binding site" evidence="1">
    <location>
        <position position="20"/>
    </location>
    <ligand>
        <name>(6S)-5-formyl-5,6,7,8-tetrahydrofolate</name>
        <dbReference type="ChEBI" id="CHEBI:57457"/>
    </ligand>
</feature>
<feature type="binding site" evidence="1">
    <location>
        <position position="77"/>
    </location>
    <ligand>
        <name>(6S)-5-formyl-5,6,7,8-tetrahydrofolate</name>
        <dbReference type="ChEBI" id="CHEBI:57457"/>
    </ligand>
</feature>
<feature type="binding site" evidence="1">
    <location>
        <position position="117"/>
    </location>
    <ligand>
        <name>(6S)-5-formyl-5,6,7,8-tetrahydrofolate</name>
        <dbReference type="ChEBI" id="CHEBI:57457"/>
    </ligand>
</feature>
<feature type="binding site" evidence="1">
    <location>
        <begin position="223"/>
        <end position="228"/>
    </location>
    <ligand>
        <name>GTP</name>
        <dbReference type="ChEBI" id="CHEBI:37565"/>
    </ligand>
</feature>
<feature type="binding site" evidence="1">
    <location>
        <position position="223"/>
    </location>
    <ligand>
        <name>K(+)</name>
        <dbReference type="ChEBI" id="CHEBI:29103"/>
    </ligand>
</feature>
<feature type="binding site" evidence="1">
    <location>
        <position position="227"/>
    </location>
    <ligand>
        <name>Mg(2+)</name>
        <dbReference type="ChEBI" id="CHEBI:18420"/>
    </ligand>
</feature>
<feature type="binding site" evidence="1">
    <location>
        <begin position="242"/>
        <end position="248"/>
    </location>
    <ligand>
        <name>GTP</name>
        <dbReference type="ChEBI" id="CHEBI:37565"/>
    </ligand>
</feature>
<feature type="binding site" evidence="1">
    <location>
        <position position="242"/>
    </location>
    <ligand>
        <name>K(+)</name>
        <dbReference type="ChEBI" id="CHEBI:29103"/>
    </ligand>
</feature>
<feature type="binding site" evidence="1">
    <location>
        <position position="244"/>
    </location>
    <ligand>
        <name>K(+)</name>
        <dbReference type="ChEBI" id="CHEBI:29103"/>
    </ligand>
</feature>
<feature type="binding site" evidence="1">
    <location>
        <position position="247"/>
    </location>
    <ligand>
        <name>K(+)</name>
        <dbReference type="ChEBI" id="CHEBI:29103"/>
    </ligand>
</feature>
<feature type="binding site" evidence="1">
    <location>
        <position position="248"/>
    </location>
    <ligand>
        <name>Mg(2+)</name>
        <dbReference type="ChEBI" id="CHEBI:18420"/>
    </ligand>
</feature>
<feature type="binding site" evidence="1">
    <location>
        <begin position="267"/>
        <end position="270"/>
    </location>
    <ligand>
        <name>GTP</name>
        <dbReference type="ChEBI" id="CHEBI:37565"/>
    </ligand>
</feature>
<feature type="binding site" evidence="1">
    <location>
        <position position="428"/>
    </location>
    <ligand>
        <name>(6S)-5-formyl-5,6,7,8-tetrahydrofolate</name>
        <dbReference type="ChEBI" id="CHEBI:57457"/>
    </ligand>
</feature>